<accession>A3LVX1</accession>
<evidence type="ECO:0000250" key="1"/>
<evidence type="ECO:0000255" key="2"/>
<evidence type="ECO:0000305" key="3"/>
<keyword id="KW-0472">Membrane</keyword>
<keyword id="KW-0496">Mitochondrion</keyword>
<keyword id="KW-0999">Mitochondrion inner membrane</keyword>
<keyword id="KW-1185">Reference proteome</keyword>
<keyword id="KW-0677">Repeat</keyword>
<keyword id="KW-0812">Transmembrane</keyword>
<keyword id="KW-1133">Transmembrane helix</keyword>
<keyword id="KW-0813">Transport</keyword>
<gene>
    <name type="primary">TPC1</name>
    <name type="ORF">PICST_60941</name>
</gene>
<dbReference type="EMBL" id="CP000499">
    <property type="protein sequence ID" value="ABN67190.2"/>
    <property type="molecule type" value="Genomic_DNA"/>
</dbReference>
<dbReference type="RefSeq" id="XP_001385219.2">
    <property type="nucleotide sequence ID" value="XM_001385182.1"/>
</dbReference>
<dbReference type="SMR" id="A3LVX1"/>
<dbReference type="FunCoup" id="A3LVX1">
    <property type="interactions" value="38"/>
</dbReference>
<dbReference type="STRING" id="322104.A3LVX1"/>
<dbReference type="GeneID" id="4839711"/>
<dbReference type="KEGG" id="pic:PICST_60941"/>
<dbReference type="eggNOG" id="KOG0752">
    <property type="taxonomic scope" value="Eukaryota"/>
</dbReference>
<dbReference type="HOGENOM" id="CLU_015166_10_3_1"/>
<dbReference type="InParanoid" id="A3LVX1"/>
<dbReference type="OMA" id="MYVCYGA"/>
<dbReference type="OrthoDB" id="18574at2759"/>
<dbReference type="Proteomes" id="UP000002258">
    <property type="component" value="Chromosome 5"/>
</dbReference>
<dbReference type="GO" id="GO:0005743">
    <property type="term" value="C:mitochondrial inner membrane"/>
    <property type="evidence" value="ECO:0007669"/>
    <property type="project" value="UniProtKB-SubCell"/>
</dbReference>
<dbReference type="GO" id="GO:0090422">
    <property type="term" value="F:thiamine pyrophosphate transmembrane transporter activity"/>
    <property type="evidence" value="ECO:0007669"/>
    <property type="project" value="EnsemblFungi"/>
</dbReference>
<dbReference type="GO" id="GO:1990545">
    <property type="term" value="P:mitochondrial thiamine pyrophosphate transmembrane transport"/>
    <property type="evidence" value="ECO:0007669"/>
    <property type="project" value="EnsemblFungi"/>
</dbReference>
<dbReference type="Gene3D" id="1.50.40.10">
    <property type="entry name" value="Mitochondrial carrier domain"/>
    <property type="match status" value="1"/>
</dbReference>
<dbReference type="InterPro" id="IPR002067">
    <property type="entry name" value="Mit_carrier"/>
</dbReference>
<dbReference type="InterPro" id="IPR018108">
    <property type="entry name" value="Mitochondrial_sb/sol_carrier"/>
</dbReference>
<dbReference type="InterPro" id="IPR023395">
    <property type="entry name" value="Mt_carrier_dom_sf"/>
</dbReference>
<dbReference type="PANTHER" id="PTHR24089">
    <property type="entry name" value="SOLUTE CARRIER FAMILY 25"/>
    <property type="match status" value="1"/>
</dbReference>
<dbReference type="Pfam" id="PF00153">
    <property type="entry name" value="Mito_carr"/>
    <property type="match status" value="3"/>
</dbReference>
<dbReference type="PRINTS" id="PR00926">
    <property type="entry name" value="MITOCARRIER"/>
</dbReference>
<dbReference type="SUPFAM" id="SSF103506">
    <property type="entry name" value="Mitochondrial carrier"/>
    <property type="match status" value="1"/>
</dbReference>
<dbReference type="PROSITE" id="PS50920">
    <property type="entry name" value="SOLCAR"/>
    <property type="match status" value="3"/>
</dbReference>
<sequence>MESRKREDHLRKGSEVSPYESLLAGSISGAVARAVTAPLDTIKIRLQLQRSAFRSRVSVTTVVKDLLKNEGAIALWKGNVPAEILYVLYGAAQFTTYSSISRWLSHLSDTSGFNLPSSAHSLVSGTGAGVVSTLVTYPFDLLRTRLAANSEKKLLSMSGTAREIISSEGFTGLFAGIKPAMLSISTTTGLMFWSYELVRETLGDRDIPFKEGICGFIAGATSKGITFPLDTIRKRTQMYKILYNSAKRVGAFRLLADIVANEGVLGLYKGFGISVLKTSPTSAVSLFVYEYSLAAIQRINRKTLD</sequence>
<name>TPC1_PICST</name>
<feature type="chain" id="PRO_0000320473" description="Mitochondrial thiamine pyrophosphate carrier 1">
    <location>
        <begin position="1"/>
        <end position="305"/>
    </location>
</feature>
<feature type="transmembrane region" description="Helical; Name=1" evidence="2">
    <location>
        <begin position="16"/>
        <end position="32"/>
    </location>
</feature>
<feature type="transmembrane region" description="Helical; Name=2" evidence="2">
    <location>
        <begin position="84"/>
        <end position="100"/>
    </location>
</feature>
<feature type="transmembrane region" description="Helical; Name=3" evidence="2">
    <location>
        <begin position="122"/>
        <end position="142"/>
    </location>
</feature>
<feature type="transmembrane region" description="Helical; Name=4" evidence="2">
    <location>
        <begin position="169"/>
        <end position="193"/>
    </location>
</feature>
<feature type="transmembrane region" description="Helical; Name=5" evidence="2">
    <location>
        <begin position="213"/>
        <end position="229"/>
    </location>
</feature>
<feature type="transmembrane region" description="Helical; Name=6" evidence="2">
    <location>
        <begin position="270"/>
        <end position="287"/>
    </location>
</feature>
<feature type="repeat" description="Solcar 1">
    <location>
        <begin position="16"/>
        <end position="103"/>
    </location>
</feature>
<feature type="repeat" description="Solcar 2">
    <location>
        <begin position="116"/>
        <end position="201"/>
    </location>
</feature>
<feature type="repeat" description="Solcar 3">
    <location>
        <begin position="206"/>
        <end position="295"/>
    </location>
</feature>
<organism>
    <name type="scientific">Scheffersomyces stipitis (strain ATCC 58785 / CBS 6054 / NBRC 10063 / NRRL Y-11545)</name>
    <name type="common">Yeast</name>
    <name type="synonym">Pichia stipitis</name>
    <dbReference type="NCBI Taxonomy" id="322104"/>
    <lineage>
        <taxon>Eukaryota</taxon>
        <taxon>Fungi</taxon>
        <taxon>Dikarya</taxon>
        <taxon>Ascomycota</taxon>
        <taxon>Saccharomycotina</taxon>
        <taxon>Pichiomycetes</taxon>
        <taxon>Debaryomycetaceae</taxon>
        <taxon>Scheffersomyces</taxon>
    </lineage>
</organism>
<protein>
    <recommendedName>
        <fullName>Mitochondrial thiamine pyrophosphate carrier 1</fullName>
    </recommendedName>
</protein>
<proteinExistence type="inferred from homology"/>
<comment type="function">
    <text evidence="1">Mitochondrial transporter that mediates uptake of thiamine pyrophosphate (ThPP) into mitochondria.</text>
</comment>
<comment type="subcellular location">
    <subcellularLocation>
        <location evidence="1">Mitochondrion inner membrane</location>
        <topology evidence="1">Multi-pass membrane protein</topology>
    </subcellularLocation>
</comment>
<comment type="similarity">
    <text evidence="3">Belongs to the mitochondrial carrier (TC 2.A.29) family.</text>
</comment>
<reference key="1">
    <citation type="journal article" date="2007" name="Nat. Biotechnol.">
        <title>Genome sequence of the lignocellulose-bioconverting and xylose-fermenting yeast Pichia stipitis.</title>
        <authorList>
            <person name="Jeffries T.W."/>
            <person name="Grigoriev I.V."/>
            <person name="Grimwood J."/>
            <person name="Laplaza J.M."/>
            <person name="Aerts A."/>
            <person name="Salamov A."/>
            <person name="Schmutz J."/>
            <person name="Lindquist E."/>
            <person name="Dehal P."/>
            <person name="Shapiro H."/>
            <person name="Jin Y.-S."/>
            <person name="Passoth V."/>
            <person name="Richardson P.M."/>
        </authorList>
    </citation>
    <scope>NUCLEOTIDE SEQUENCE [LARGE SCALE GENOMIC DNA]</scope>
    <source>
        <strain>ATCC 58785 / CBS 6054 / NBRC 10063 / NRRL Y-11545</strain>
    </source>
</reference>